<name>ARGB_BURM9</name>
<keyword id="KW-0028">Amino-acid biosynthesis</keyword>
<keyword id="KW-0055">Arginine biosynthesis</keyword>
<keyword id="KW-0067">ATP-binding</keyword>
<keyword id="KW-0963">Cytoplasm</keyword>
<keyword id="KW-0418">Kinase</keyword>
<keyword id="KW-0547">Nucleotide-binding</keyword>
<keyword id="KW-0808">Transferase</keyword>
<comment type="function">
    <text evidence="1">Catalyzes the ATP-dependent phosphorylation of N-acetyl-L-glutamate.</text>
</comment>
<comment type="catalytic activity">
    <reaction evidence="1">
        <text>N-acetyl-L-glutamate + ATP = N-acetyl-L-glutamyl 5-phosphate + ADP</text>
        <dbReference type="Rhea" id="RHEA:14629"/>
        <dbReference type="ChEBI" id="CHEBI:30616"/>
        <dbReference type="ChEBI" id="CHEBI:44337"/>
        <dbReference type="ChEBI" id="CHEBI:57936"/>
        <dbReference type="ChEBI" id="CHEBI:456216"/>
        <dbReference type="EC" id="2.7.2.8"/>
    </reaction>
</comment>
<comment type="pathway">
    <text evidence="1">Amino-acid biosynthesis; L-arginine biosynthesis; N(2)-acetyl-L-ornithine from L-glutamate: step 2/4.</text>
</comment>
<comment type="subcellular location">
    <subcellularLocation>
        <location evidence="1">Cytoplasm</location>
    </subcellularLocation>
</comment>
<comment type="similarity">
    <text evidence="1">Belongs to the acetylglutamate kinase family. ArgB subfamily.</text>
</comment>
<comment type="sequence caution" evidence="2">
    <conflict type="erroneous initiation">
        <sequence resource="EMBL-CDS" id="ABN01944"/>
    </conflict>
</comment>
<feature type="chain" id="PRO_0000335613" description="Acetylglutamate kinase">
    <location>
        <begin position="1"/>
        <end position="299"/>
    </location>
</feature>
<feature type="binding site" evidence="1">
    <location>
        <begin position="72"/>
        <end position="73"/>
    </location>
    <ligand>
        <name>substrate</name>
    </ligand>
</feature>
<feature type="binding site" evidence="1">
    <location>
        <position position="94"/>
    </location>
    <ligand>
        <name>substrate</name>
    </ligand>
</feature>
<feature type="binding site" evidence="1">
    <location>
        <position position="196"/>
    </location>
    <ligand>
        <name>substrate</name>
    </ligand>
</feature>
<feature type="site" description="Transition state stabilizer" evidence="1">
    <location>
        <position position="37"/>
    </location>
</feature>
<feature type="site" description="Transition state stabilizer" evidence="1">
    <location>
        <position position="256"/>
    </location>
</feature>
<organism>
    <name type="scientific">Burkholderia mallei (strain NCTC 10229)</name>
    <dbReference type="NCBI Taxonomy" id="412022"/>
    <lineage>
        <taxon>Bacteria</taxon>
        <taxon>Pseudomonadati</taxon>
        <taxon>Pseudomonadota</taxon>
        <taxon>Betaproteobacteria</taxon>
        <taxon>Burkholderiales</taxon>
        <taxon>Burkholderiaceae</taxon>
        <taxon>Burkholderia</taxon>
        <taxon>pseudomallei group</taxon>
    </lineage>
</organism>
<reference key="1">
    <citation type="journal article" date="2010" name="Genome Biol. Evol.">
        <title>Continuing evolution of Burkholderia mallei through genome reduction and large-scale rearrangements.</title>
        <authorList>
            <person name="Losada L."/>
            <person name="Ronning C.M."/>
            <person name="DeShazer D."/>
            <person name="Woods D."/>
            <person name="Fedorova N."/>
            <person name="Kim H.S."/>
            <person name="Shabalina S.A."/>
            <person name="Pearson T.R."/>
            <person name="Brinkac L."/>
            <person name="Tan P."/>
            <person name="Nandi T."/>
            <person name="Crabtree J."/>
            <person name="Badger J."/>
            <person name="Beckstrom-Sternberg S."/>
            <person name="Saqib M."/>
            <person name="Schutzer S.E."/>
            <person name="Keim P."/>
            <person name="Nierman W.C."/>
        </authorList>
    </citation>
    <scope>NUCLEOTIDE SEQUENCE [LARGE SCALE GENOMIC DNA]</scope>
    <source>
        <strain>NCTC 10229</strain>
    </source>
</reference>
<sequence>MSEPIDLSQISPALKAEILAEALPYIRRYHGKTVVIKYGGNAMTEERLKQGFARDVILLKLVGINPVIVHGGGPQIDQALKKIGKQGTFIQGMRVTDEETMEVVEWVLGGEVQQDIVTLINHFGGHAVGLTGKDGGLIHARKLMMPDRDNPGEYVDIGQVGEVEAINPAVVKALQDDAFIPVISPIGFGEDGLSYNINADLVAGKLATVLNAEKLVMMTNIPGVMDKEGNLLTDLSAREIDALFEDGTISGGMLPKISSALDAAKSGVKSVHIVDGRIEHSVLLEILTEQPFGTMIRSH</sequence>
<accession>A2S874</accession>
<proteinExistence type="inferred from homology"/>
<gene>
    <name evidence="1" type="primary">argB</name>
    <name type="ordered locus">BMA10229_A2179</name>
</gene>
<protein>
    <recommendedName>
        <fullName evidence="1">Acetylglutamate kinase</fullName>
        <ecNumber evidence="1">2.7.2.8</ecNumber>
    </recommendedName>
    <alternativeName>
        <fullName evidence="1">N-acetyl-L-glutamate 5-phosphotransferase</fullName>
    </alternativeName>
    <alternativeName>
        <fullName evidence="1">NAG kinase</fullName>
        <shortName evidence="1">NAGK</shortName>
    </alternativeName>
</protein>
<evidence type="ECO:0000255" key="1">
    <source>
        <dbReference type="HAMAP-Rule" id="MF_00082"/>
    </source>
</evidence>
<evidence type="ECO:0000305" key="2"/>
<dbReference type="EC" id="2.7.2.8" evidence="1"/>
<dbReference type="EMBL" id="CP000546">
    <property type="protein sequence ID" value="ABN01944.1"/>
    <property type="status" value="ALT_INIT"/>
    <property type="molecule type" value="Genomic_DNA"/>
</dbReference>
<dbReference type="RefSeq" id="WP_004200214.1">
    <property type="nucleotide sequence ID" value="NC_008836.1"/>
</dbReference>
<dbReference type="SMR" id="A2S874"/>
<dbReference type="GeneID" id="93058708"/>
<dbReference type="KEGG" id="bml:BMA10229_A2179"/>
<dbReference type="HOGENOM" id="CLU_053680_0_0_4"/>
<dbReference type="UniPathway" id="UPA00068">
    <property type="reaction ID" value="UER00107"/>
</dbReference>
<dbReference type="Proteomes" id="UP000002283">
    <property type="component" value="Chromosome I"/>
</dbReference>
<dbReference type="GO" id="GO:0005737">
    <property type="term" value="C:cytoplasm"/>
    <property type="evidence" value="ECO:0007669"/>
    <property type="project" value="UniProtKB-SubCell"/>
</dbReference>
<dbReference type="GO" id="GO:0003991">
    <property type="term" value="F:acetylglutamate kinase activity"/>
    <property type="evidence" value="ECO:0007669"/>
    <property type="project" value="UniProtKB-UniRule"/>
</dbReference>
<dbReference type="GO" id="GO:0005524">
    <property type="term" value="F:ATP binding"/>
    <property type="evidence" value="ECO:0007669"/>
    <property type="project" value="UniProtKB-UniRule"/>
</dbReference>
<dbReference type="GO" id="GO:0042450">
    <property type="term" value="P:arginine biosynthetic process via ornithine"/>
    <property type="evidence" value="ECO:0007669"/>
    <property type="project" value="UniProtKB-UniRule"/>
</dbReference>
<dbReference type="GO" id="GO:0006526">
    <property type="term" value="P:L-arginine biosynthetic process"/>
    <property type="evidence" value="ECO:0007669"/>
    <property type="project" value="UniProtKB-UniPathway"/>
</dbReference>
<dbReference type="CDD" id="cd04250">
    <property type="entry name" value="AAK_NAGK-C"/>
    <property type="match status" value="1"/>
</dbReference>
<dbReference type="FunFam" id="3.40.1160.10:FF:000004">
    <property type="entry name" value="Acetylglutamate kinase"/>
    <property type="match status" value="1"/>
</dbReference>
<dbReference type="Gene3D" id="3.40.1160.10">
    <property type="entry name" value="Acetylglutamate kinase-like"/>
    <property type="match status" value="1"/>
</dbReference>
<dbReference type="HAMAP" id="MF_00082">
    <property type="entry name" value="ArgB"/>
    <property type="match status" value="1"/>
</dbReference>
<dbReference type="InterPro" id="IPR036393">
    <property type="entry name" value="AceGlu_kinase-like_sf"/>
</dbReference>
<dbReference type="InterPro" id="IPR004662">
    <property type="entry name" value="AcgluKinase_fam"/>
</dbReference>
<dbReference type="InterPro" id="IPR037528">
    <property type="entry name" value="ArgB"/>
</dbReference>
<dbReference type="InterPro" id="IPR001048">
    <property type="entry name" value="Asp/Glu/Uridylate_kinase"/>
</dbReference>
<dbReference type="InterPro" id="IPR041727">
    <property type="entry name" value="NAGK-C"/>
</dbReference>
<dbReference type="NCBIfam" id="TIGR00761">
    <property type="entry name" value="argB"/>
    <property type="match status" value="1"/>
</dbReference>
<dbReference type="PANTHER" id="PTHR23342">
    <property type="entry name" value="N-ACETYLGLUTAMATE SYNTHASE"/>
    <property type="match status" value="1"/>
</dbReference>
<dbReference type="PANTHER" id="PTHR23342:SF0">
    <property type="entry name" value="N-ACETYLGLUTAMATE SYNTHASE, MITOCHONDRIAL"/>
    <property type="match status" value="1"/>
</dbReference>
<dbReference type="Pfam" id="PF00696">
    <property type="entry name" value="AA_kinase"/>
    <property type="match status" value="1"/>
</dbReference>
<dbReference type="PIRSF" id="PIRSF000728">
    <property type="entry name" value="NAGK"/>
    <property type="match status" value="1"/>
</dbReference>
<dbReference type="SUPFAM" id="SSF53633">
    <property type="entry name" value="Carbamate kinase-like"/>
    <property type="match status" value="1"/>
</dbReference>